<reference key="1">
    <citation type="submission" date="1998-12" db="EMBL/GenBank/DDBJ databases">
        <authorList>
            <person name="Zhao B."/>
            <person name="Xu Y.Y."/>
            <person name="Liu Y.Q."/>
            <person name="Wang X.Y."/>
            <person name="Liu B."/>
            <person name="Ye J."/>
            <person name="Song L."/>
            <person name="Zhao Y."/>
            <person name="Cao H.Q."/>
            <person name="Zhao X.W."/>
            <person name="Gao Y."/>
            <person name="Zhang C.L."/>
            <person name="Zhang J."/>
            <person name="Liu L.S."/>
            <person name="Ding J.F."/>
            <person name="Gao R.L."/>
            <person name="Wu Q.Y."/>
            <person name="Qiang B.Q."/>
            <person name="Yuan J.G."/>
            <person name="Liew C.C."/>
            <person name="Zhao M.S."/>
            <person name="Hui R.T."/>
        </authorList>
    </citation>
    <scope>NUCLEOTIDE SEQUENCE [LARGE SCALE MRNA] (ISOFORM 1)</scope>
    <source>
        <tissue>Heart</tissue>
    </source>
</reference>
<reference key="2">
    <citation type="journal article" date="2000" name="Genome Res.">
        <title>Cloning and functional analysis of cDNAs with open reading frames for 300 previously undefined genes expressed in CD34+ hematopoietic stem/progenitor cells.</title>
        <authorList>
            <person name="Zhang Q.-H."/>
            <person name="Ye M."/>
            <person name="Wu X.-Y."/>
            <person name="Ren S.-X."/>
            <person name="Zhao M."/>
            <person name="Zhao C.-J."/>
            <person name="Fu G."/>
            <person name="Shen Y."/>
            <person name="Fan H.-Y."/>
            <person name="Lu G."/>
            <person name="Zhong M."/>
            <person name="Xu X.-R."/>
            <person name="Han Z.-G."/>
            <person name="Zhang J.-W."/>
            <person name="Tao J."/>
            <person name="Huang Q.-H."/>
            <person name="Zhou J."/>
            <person name="Hu G.-X."/>
            <person name="Gu J."/>
            <person name="Chen S.-J."/>
            <person name="Chen Z."/>
        </authorList>
    </citation>
    <scope>NUCLEOTIDE SEQUENCE [LARGE SCALE MRNA] (ISOFORM 1)</scope>
    <source>
        <tissue>Umbilical cord blood</tissue>
    </source>
</reference>
<reference key="3">
    <citation type="journal article" date="2004" name="Nat. Genet.">
        <title>Complete sequencing and characterization of 21,243 full-length human cDNAs.</title>
        <authorList>
            <person name="Ota T."/>
            <person name="Suzuki Y."/>
            <person name="Nishikawa T."/>
            <person name="Otsuki T."/>
            <person name="Sugiyama T."/>
            <person name="Irie R."/>
            <person name="Wakamatsu A."/>
            <person name="Hayashi K."/>
            <person name="Sato H."/>
            <person name="Nagai K."/>
            <person name="Kimura K."/>
            <person name="Makita H."/>
            <person name="Sekine M."/>
            <person name="Obayashi M."/>
            <person name="Nishi T."/>
            <person name="Shibahara T."/>
            <person name="Tanaka T."/>
            <person name="Ishii S."/>
            <person name="Yamamoto J."/>
            <person name="Saito K."/>
            <person name="Kawai Y."/>
            <person name="Isono Y."/>
            <person name="Nakamura Y."/>
            <person name="Nagahari K."/>
            <person name="Murakami K."/>
            <person name="Yasuda T."/>
            <person name="Iwayanagi T."/>
            <person name="Wagatsuma M."/>
            <person name="Shiratori A."/>
            <person name="Sudo H."/>
            <person name="Hosoiri T."/>
            <person name="Kaku Y."/>
            <person name="Kodaira H."/>
            <person name="Kondo H."/>
            <person name="Sugawara M."/>
            <person name="Takahashi M."/>
            <person name="Kanda K."/>
            <person name="Yokoi T."/>
            <person name="Furuya T."/>
            <person name="Kikkawa E."/>
            <person name="Omura Y."/>
            <person name="Abe K."/>
            <person name="Kamihara K."/>
            <person name="Katsuta N."/>
            <person name="Sato K."/>
            <person name="Tanikawa M."/>
            <person name="Yamazaki M."/>
            <person name="Ninomiya K."/>
            <person name="Ishibashi T."/>
            <person name="Yamashita H."/>
            <person name="Murakawa K."/>
            <person name="Fujimori K."/>
            <person name="Tanai H."/>
            <person name="Kimata M."/>
            <person name="Watanabe M."/>
            <person name="Hiraoka S."/>
            <person name="Chiba Y."/>
            <person name="Ishida S."/>
            <person name="Ono Y."/>
            <person name="Takiguchi S."/>
            <person name="Watanabe S."/>
            <person name="Yosida M."/>
            <person name="Hotuta T."/>
            <person name="Kusano J."/>
            <person name="Kanehori K."/>
            <person name="Takahashi-Fujii A."/>
            <person name="Hara H."/>
            <person name="Tanase T.-O."/>
            <person name="Nomura Y."/>
            <person name="Togiya S."/>
            <person name="Komai F."/>
            <person name="Hara R."/>
            <person name="Takeuchi K."/>
            <person name="Arita M."/>
            <person name="Imose N."/>
            <person name="Musashino K."/>
            <person name="Yuuki H."/>
            <person name="Oshima A."/>
            <person name="Sasaki N."/>
            <person name="Aotsuka S."/>
            <person name="Yoshikawa Y."/>
            <person name="Matsunawa H."/>
            <person name="Ichihara T."/>
            <person name="Shiohata N."/>
            <person name="Sano S."/>
            <person name="Moriya S."/>
            <person name="Momiyama H."/>
            <person name="Satoh N."/>
            <person name="Takami S."/>
            <person name="Terashima Y."/>
            <person name="Suzuki O."/>
            <person name="Nakagawa S."/>
            <person name="Senoh A."/>
            <person name="Mizoguchi H."/>
            <person name="Goto Y."/>
            <person name="Shimizu F."/>
            <person name="Wakebe H."/>
            <person name="Hishigaki H."/>
            <person name="Watanabe T."/>
            <person name="Sugiyama A."/>
            <person name="Takemoto M."/>
            <person name="Kawakami B."/>
            <person name="Yamazaki M."/>
            <person name="Watanabe K."/>
            <person name="Kumagai A."/>
            <person name="Itakura S."/>
            <person name="Fukuzumi Y."/>
            <person name="Fujimori Y."/>
            <person name="Komiyama M."/>
            <person name="Tashiro H."/>
            <person name="Tanigami A."/>
            <person name="Fujiwara T."/>
            <person name="Ono T."/>
            <person name="Yamada K."/>
            <person name="Fujii Y."/>
            <person name="Ozaki K."/>
            <person name="Hirao M."/>
            <person name="Ohmori Y."/>
            <person name="Kawabata A."/>
            <person name="Hikiji T."/>
            <person name="Kobatake N."/>
            <person name="Inagaki H."/>
            <person name="Ikema Y."/>
            <person name="Okamoto S."/>
            <person name="Okitani R."/>
            <person name="Kawakami T."/>
            <person name="Noguchi S."/>
            <person name="Itoh T."/>
            <person name="Shigeta K."/>
            <person name="Senba T."/>
            <person name="Matsumura K."/>
            <person name="Nakajima Y."/>
            <person name="Mizuno T."/>
            <person name="Morinaga M."/>
            <person name="Sasaki M."/>
            <person name="Togashi T."/>
            <person name="Oyama M."/>
            <person name="Hata H."/>
            <person name="Watanabe M."/>
            <person name="Komatsu T."/>
            <person name="Mizushima-Sugano J."/>
            <person name="Satoh T."/>
            <person name="Shirai Y."/>
            <person name="Takahashi Y."/>
            <person name="Nakagawa K."/>
            <person name="Okumura K."/>
            <person name="Nagase T."/>
            <person name="Nomura N."/>
            <person name="Kikuchi H."/>
            <person name="Masuho Y."/>
            <person name="Yamashita R."/>
            <person name="Nakai K."/>
            <person name="Yada T."/>
            <person name="Nakamura Y."/>
            <person name="Ohara O."/>
            <person name="Isogai T."/>
            <person name="Sugano S."/>
        </authorList>
    </citation>
    <scope>NUCLEOTIDE SEQUENCE [LARGE SCALE MRNA] (ISOFORMS 1 AND 2)</scope>
    <source>
        <tissue>Placenta</tissue>
    </source>
</reference>
<reference key="4">
    <citation type="journal article" date="2003" name="Science">
        <title>Human chromosome 7: DNA sequence and biology.</title>
        <authorList>
            <person name="Scherer S.W."/>
            <person name="Cheung J."/>
            <person name="MacDonald J.R."/>
            <person name="Osborne L.R."/>
            <person name="Nakabayashi K."/>
            <person name="Herbrick J.-A."/>
            <person name="Carson A.R."/>
            <person name="Parker-Katiraee L."/>
            <person name="Skaug J."/>
            <person name="Khaja R."/>
            <person name="Zhang J."/>
            <person name="Hudek A.K."/>
            <person name="Li M."/>
            <person name="Haddad M."/>
            <person name="Duggan G.E."/>
            <person name="Fernandez B.A."/>
            <person name="Kanematsu E."/>
            <person name="Gentles S."/>
            <person name="Christopoulos C.C."/>
            <person name="Choufani S."/>
            <person name="Kwasnicka D."/>
            <person name="Zheng X.H."/>
            <person name="Lai Z."/>
            <person name="Nusskern D.R."/>
            <person name="Zhang Q."/>
            <person name="Gu Z."/>
            <person name="Lu F."/>
            <person name="Zeesman S."/>
            <person name="Nowaczyk M.J."/>
            <person name="Teshima I."/>
            <person name="Chitayat D."/>
            <person name="Shuman C."/>
            <person name="Weksberg R."/>
            <person name="Zackai E.H."/>
            <person name="Grebe T.A."/>
            <person name="Cox S.R."/>
            <person name="Kirkpatrick S.J."/>
            <person name="Rahman N."/>
            <person name="Friedman J.M."/>
            <person name="Heng H.H.Q."/>
            <person name="Pelicci P.G."/>
            <person name="Lo-Coco F."/>
            <person name="Belloni E."/>
            <person name="Shaffer L.G."/>
            <person name="Pober B."/>
            <person name="Morton C.C."/>
            <person name="Gusella J.F."/>
            <person name="Bruns G.A.P."/>
            <person name="Korf B.R."/>
            <person name="Quade B.J."/>
            <person name="Ligon A.H."/>
            <person name="Ferguson H."/>
            <person name="Higgins A.W."/>
            <person name="Leach N.T."/>
            <person name="Herrick S.R."/>
            <person name="Lemyre E."/>
            <person name="Farra C.G."/>
            <person name="Kim H.-G."/>
            <person name="Summers A.M."/>
            <person name="Gripp K.W."/>
            <person name="Roberts W."/>
            <person name="Szatmari P."/>
            <person name="Winsor E.J.T."/>
            <person name="Grzeschik K.-H."/>
            <person name="Teebi A."/>
            <person name="Minassian B.A."/>
            <person name="Kere J."/>
            <person name="Armengol L."/>
            <person name="Pujana M.A."/>
            <person name="Estivill X."/>
            <person name="Wilson M.D."/>
            <person name="Koop B.F."/>
            <person name="Tosi S."/>
            <person name="Moore G.E."/>
            <person name="Boright A.P."/>
            <person name="Zlotorynski E."/>
            <person name="Kerem B."/>
            <person name="Kroisel P.M."/>
            <person name="Petek E."/>
            <person name="Oscier D.G."/>
            <person name="Mould S.J."/>
            <person name="Doehner H."/>
            <person name="Doehner K."/>
            <person name="Rommens J.M."/>
            <person name="Vincent J.B."/>
            <person name="Venter J.C."/>
            <person name="Li P.W."/>
            <person name="Mural R.J."/>
            <person name="Adams M.D."/>
            <person name="Tsui L.-C."/>
        </authorList>
    </citation>
    <scope>NUCLEOTIDE SEQUENCE [LARGE SCALE GENOMIC DNA]</scope>
</reference>
<reference key="5">
    <citation type="submission" date="2005-07" db="EMBL/GenBank/DDBJ databases">
        <authorList>
            <person name="Mural R.J."/>
            <person name="Istrail S."/>
            <person name="Sutton G.G."/>
            <person name="Florea L."/>
            <person name="Halpern A.L."/>
            <person name="Mobarry C.M."/>
            <person name="Lippert R."/>
            <person name="Walenz B."/>
            <person name="Shatkay H."/>
            <person name="Dew I."/>
            <person name="Miller J.R."/>
            <person name="Flanigan M.J."/>
            <person name="Edwards N.J."/>
            <person name="Bolanos R."/>
            <person name="Fasulo D."/>
            <person name="Halldorsson B.V."/>
            <person name="Hannenhalli S."/>
            <person name="Turner R."/>
            <person name="Yooseph S."/>
            <person name="Lu F."/>
            <person name="Nusskern D.R."/>
            <person name="Shue B.C."/>
            <person name="Zheng X.H."/>
            <person name="Zhong F."/>
            <person name="Delcher A.L."/>
            <person name="Huson D.H."/>
            <person name="Kravitz S.A."/>
            <person name="Mouchard L."/>
            <person name="Reinert K."/>
            <person name="Remington K.A."/>
            <person name="Clark A.G."/>
            <person name="Waterman M.S."/>
            <person name="Eichler E.E."/>
            <person name="Adams M.D."/>
            <person name="Hunkapiller M.W."/>
            <person name="Myers E.W."/>
            <person name="Venter J.C."/>
        </authorList>
    </citation>
    <scope>NUCLEOTIDE SEQUENCE [LARGE SCALE GENOMIC DNA]</scope>
</reference>
<reference key="6">
    <citation type="journal article" date="2004" name="Genome Res.">
        <title>The status, quality, and expansion of the NIH full-length cDNA project: the Mammalian Gene Collection (MGC).</title>
        <authorList>
            <consortium name="The MGC Project Team"/>
        </authorList>
    </citation>
    <scope>NUCLEOTIDE SEQUENCE [LARGE SCALE MRNA] (ISOFORM 1)</scope>
    <source>
        <tissue>Bone marrow</tissue>
        <tissue>Kidney</tissue>
        <tissue>Skeletal muscle</tissue>
    </source>
</reference>
<reference key="7">
    <citation type="journal article" date="2006" name="Cell">
        <title>Global, in vivo, and site-specific phosphorylation dynamics in signaling networks.</title>
        <authorList>
            <person name="Olsen J.V."/>
            <person name="Blagoev B."/>
            <person name="Gnad F."/>
            <person name="Macek B."/>
            <person name="Kumar C."/>
            <person name="Mortensen P."/>
            <person name="Mann M."/>
        </authorList>
    </citation>
    <scope>PHOSPHORYLATION [LARGE SCALE ANALYSIS] AT SER-412 AND SER-414</scope>
    <scope>IDENTIFICATION BY MASS SPECTROMETRY [LARGE SCALE ANALYSIS]</scope>
    <source>
        <tissue>Cervix carcinoma</tissue>
    </source>
</reference>
<reference key="8">
    <citation type="journal article" date="2008" name="Mol. Cell">
        <title>Kinase-selective enrichment enables quantitative phosphoproteomics of the kinome across the cell cycle.</title>
        <authorList>
            <person name="Daub H."/>
            <person name="Olsen J.V."/>
            <person name="Bairlein M."/>
            <person name="Gnad F."/>
            <person name="Oppermann F.S."/>
            <person name="Korner R."/>
            <person name="Greff Z."/>
            <person name="Keri G."/>
            <person name="Stemmann O."/>
            <person name="Mann M."/>
        </authorList>
    </citation>
    <scope>PHOSPHORYLATION [LARGE SCALE ANALYSIS] AT SER-412 AND SER-414</scope>
    <scope>IDENTIFICATION BY MASS SPECTROMETRY [LARGE SCALE ANALYSIS]</scope>
    <source>
        <tissue>Cervix carcinoma</tissue>
    </source>
</reference>
<reference key="9">
    <citation type="journal article" date="2008" name="Proc. Natl. Acad. Sci. U.S.A.">
        <title>A quantitative atlas of mitotic phosphorylation.</title>
        <authorList>
            <person name="Dephoure N."/>
            <person name="Zhou C."/>
            <person name="Villen J."/>
            <person name="Beausoleil S.A."/>
            <person name="Bakalarski C.E."/>
            <person name="Elledge S.J."/>
            <person name="Gygi S.P."/>
        </authorList>
    </citation>
    <scope>IDENTIFICATION BY MASS SPECTROMETRY [LARGE SCALE ANALYSIS]</scope>
    <source>
        <tissue>Cervix carcinoma</tissue>
    </source>
</reference>
<reference key="10">
    <citation type="journal article" date="2009" name="Anal. Chem.">
        <title>Lys-N and trypsin cover complementary parts of the phosphoproteome in a refined SCX-based approach.</title>
        <authorList>
            <person name="Gauci S."/>
            <person name="Helbig A.O."/>
            <person name="Slijper M."/>
            <person name="Krijgsveld J."/>
            <person name="Heck A.J."/>
            <person name="Mohammed S."/>
        </authorList>
    </citation>
    <scope>IDENTIFICATION BY MASS SPECTROMETRY [LARGE SCALE ANALYSIS]</scope>
</reference>
<reference key="11">
    <citation type="journal article" date="2009" name="Sci. Signal.">
        <title>Quantitative phosphoproteomic analysis of T cell receptor signaling reveals system-wide modulation of protein-protein interactions.</title>
        <authorList>
            <person name="Mayya V."/>
            <person name="Lundgren D.H."/>
            <person name="Hwang S.-I."/>
            <person name="Rezaul K."/>
            <person name="Wu L."/>
            <person name="Eng J.K."/>
            <person name="Rodionov V."/>
            <person name="Han D.K."/>
        </authorList>
    </citation>
    <scope>PHOSPHORYLATION [LARGE SCALE ANALYSIS] AT SER-412</scope>
    <scope>IDENTIFICATION BY MASS SPECTROMETRY [LARGE SCALE ANALYSIS]</scope>
    <source>
        <tissue>Leukemic T-cell</tissue>
    </source>
</reference>
<reference key="12">
    <citation type="journal article" date="2009" name="Science">
        <title>Lysine acetylation targets protein complexes and co-regulates major cellular functions.</title>
        <authorList>
            <person name="Choudhary C."/>
            <person name="Kumar C."/>
            <person name="Gnad F."/>
            <person name="Nielsen M.L."/>
            <person name="Rehman M."/>
            <person name="Walther T.C."/>
            <person name="Olsen J.V."/>
            <person name="Mann M."/>
        </authorList>
    </citation>
    <scope>ACETYLATION [LARGE SCALE ANALYSIS] AT LYS-117</scope>
    <scope>IDENTIFICATION BY MASS SPECTROMETRY [LARGE SCALE ANALYSIS]</scope>
</reference>
<reference key="13">
    <citation type="journal article" date="2010" name="Sci. Signal.">
        <title>Quantitative phosphoproteomics reveals widespread full phosphorylation site occupancy during mitosis.</title>
        <authorList>
            <person name="Olsen J.V."/>
            <person name="Vermeulen M."/>
            <person name="Santamaria A."/>
            <person name="Kumar C."/>
            <person name="Miller M.L."/>
            <person name="Jensen L.J."/>
            <person name="Gnad F."/>
            <person name="Cox J."/>
            <person name="Jensen T.S."/>
            <person name="Nigg E.A."/>
            <person name="Brunak S."/>
            <person name="Mann M."/>
        </authorList>
    </citation>
    <scope>PHOSPHORYLATION [LARGE SCALE ANALYSIS] AT SER-412 AND SER-414</scope>
    <scope>IDENTIFICATION BY MASS SPECTROMETRY [LARGE SCALE ANALYSIS]</scope>
    <source>
        <tissue>Cervix carcinoma</tissue>
    </source>
</reference>
<reference key="14">
    <citation type="journal article" date="2011" name="BMC Syst. Biol.">
        <title>Initial characterization of the human central proteome.</title>
        <authorList>
            <person name="Burkard T.R."/>
            <person name="Planyavsky M."/>
            <person name="Kaupe I."/>
            <person name="Breitwieser F.P."/>
            <person name="Buerckstuemmer T."/>
            <person name="Bennett K.L."/>
            <person name="Superti-Furga G."/>
            <person name="Colinge J."/>
        </authorList>
    </citation>
    <scope>IDENTIFICATION BY MASS SPECTROMETRY [LARGE SCALE ANALYSIS]</scope>
</reference>
<reference key="15">
    <citation type="journal article" date="2011" name="Sci. Signal.">
        <title>System-wide temporal characterization of the proteome and phosphoproteome of human embryonic stem cell differentiation.</title>
        <authorList>
            <person name="Rigbolt K.T."/>
            <person name="Prokhorova T.A."/>
            <person name="Akimov V."/>
            <person name="Henningsen J."/>
            <person name="Johansen P.T."/>
            <person name="Kratchmarova I."/>
            <person name="Kassem M."/>
            <person name="Mann M."/>
            <person name="Olsen J.V."/>
            <person name="Blagoev B."/>
        </authorList>
    </citation>
    <scope>PHOSPHORYLATION [LARGE SCALE ANALYSIS] AT SER-412 AND SER-414</scope>
    <scope>IDENTIFICATION BY MASS SPECTROMETRY [LARGE SCALE ANALYSIS]</scope>
</reference>
<reference key="16">
    <citation type="journal article" date="2015" name="Proteomics">
        <title>N-terminome analysis of the human mitochondrial proteome.</title>
        <authorList>
            <person name="Vaca Jacome A.S."/>
            <person name="Rabilloud T."/>
            <person name="Schaeffer-Reiss C."/>
            <person name="Rompais M."/>
            <person name="Ayoub D."/>
            <person name="Lane L."/>
            <person name="Bairoch A."/>
            <person name="Van Dorsselaer A."/>
            <person name="Carapito C."/>
        </authorList>
    </citation>
    <scope>IDENTIFICATION BY MASS SPECTROMETRY [LARGE SCALE ANALYSIS]</scope>
</reference>
<reference key="17">
    <citation type="journal article" date="2011" name="Nucleic Acids Res.">
        <title>Mechanisms of translational regulation by a human eIF5-mimic protein.</title>
        <authorList>
            <person name="Singh C.R."/>
            <person name="Watanabe R."/>
            <person name="Zhou D."/>
            <person name="Jennings M.D."/>
            <person name="Fukao A."/>
            <person name="Lee B."/>
            <person name="Ikeda Y."/>
            <person name="Chiorini J.A."/>
            <person name="Campbell S.G."/>
            <person name="Ashe M.P."/>
            <person name="Fujiwara T."/>
            <person name="Wek R.C."/>
            <person name="Pavitt G.D."/>
            <person name="Asano K."/>
        </authorList>
    </citation>
    <scope>FUNCTION</scope>
    <scope>NOMENCLATURE</scope>
    <scope>SUBCELLULAR LOCATION</scope>
    <scope>INTERACTION WITH EIF3E AND EIF2S2</scope>
    <scope>MUTAGENESIS OF 401-PHE--GLU-411</scope>
</reference>
<reference key="18">
    <citation type="journal article" date="2014" name="Nucleic Acids Res.">
        <title>Essential role of eIF5-mimic protein in animal development is linked to control of ATF4 expression.</title>
        <authorList>
            <person name="Hiraishi H."/>
            <person name="Oatman J."/>
            <person name="Haller S.L."/>
            <person name="Blunk L."/>
            <person name="McGivern B."/>
            <person name="Morris J."/>
            <person name="Papadopoulos E."/>
            <person name="Gutierrez W."/>
            <person name="Gordon M."/>
            <person name="Bokhari W."/>
            <person name="Ikeda Y."/>
            <person name="Miles D."/>
            <person name="Fellers J."/>
            <person name="Asano M."/>
            <person name="Wagner G."/>
            <person name="Tazi L."/>
            <person name="Rothenburg S."/>
            <person name="Brown S.J."/>
            <person name="Asano K."/>
        </authorList>
    </citation>
    <scope>INTERACTION WITH EIF2S2</scope>
</reference>
<reference key="19">
    <citation type="journal article" date="2017" name="Nucleic Acids Res.">
        <title>Competition between translation initiation factor eIF5 and its mimic protein 5MP determines non-AUG initiation rate genome-wide.</title>
        <authorList>
            <person name="Tang L."/>
            <person name="Morris J."/>
            <person name="Wan J."/>
            <person name="Moore C."/>
            <person name="Fujita Y."/>
            <person name="Gillaspie S."/>
            <person name="Aube E."/>
            <person name="Nanda J."/>
            <person name="Marques M."/>
            <person name="Jangal M."/>
            <person name="Anderson A."/>
            <person name="Cox C."/>
            <person name="Hiraishi H."/>
            <person name="Dong L."/>
            <person name="Saito H."/>
            <person name="Singh C.R."/>
            <person name="Witcher M."/>
            <person name="Topisirovic I."/>
            <person name="Qian S.B."/>
            <person name="Asano K."/>
        </authorList>
    </citation>
    <scope>FUNCTION</scope>
</reference>
<reference key="20">
    <citation type="journal article" date="2018" name="PLoS ONE">
        <title>Translational autoregulation of BZW1 and BZW2 expression by modulating the stringency of start codon selection.</title>
        <authorList>
            <person name="Loughran G."/>
            <person name="Firth A.E."/>
            <person name="Atkins J.F."/>
            <person name="Ivanov I.P."/>
        </authorList>
    </citation>
    <scope>FUNCTION</scope>
</reference>
<reference key="21">
    <citation type="journal article" date="2021" name="Cell Rep.">
        <title>Human oncoprotein 5MP suppresses general and repeat-associated non-AUG translation via eIF3 by a common mechanism.</title>
        <authorList>
            <person name="Singh C.R."/>
            <person name="Glineburg M.R."/>
            <person name="Moore C."/>
            <person name="Tani N."/>
            <person name="Jaiswal R."/>
            <person name="Zou Y."/>
            <person name="Aube E."/>
            <person name="Gillaspie S."/>
            <person name="Thornton M."/>
            <person name="Cecil A."/>
            <person name="Hilgers M."/>
            <person name="Takasu A."/>
            <person name="Asano I."/>
            <person name="Asano M."/>
            <person name="Escalante C.R."/>
            <person name="Nakamura A."/>
            <person name="Todd P.K."/>
            <person name="Asano K."/>
        </authorList>
    </citation>
    <scope>FUNCTION</scope>
    <scope>INTERACTION WITH EIF2S2 AND EIF3C</scope>
    <scope>MUTAGENESIS OF 380-LYS--LYS-391 AND 401-PHE--GLU-411</scope>
</reference>
<feature type="chain" id="PRO_0000254618" description="eIF5-mimic protein 1">
    <location>
        <begin position="1"/>
        <end position="419"/>
    </location>
</feature>
<feature type="domain" description="W2" evidence="1">
    <location>
        <begin position="248"/>
        <end position="415"/>
    </location>
</feature>
<feature type="region of interest" description="Disordered" evidence="2">
    <location>
        <begin position="1"/>
        <end position="22"/>
    </location>
</feature>
<feature type="modified residue" description="N6-acetyllysine" evidence="13">
    <location>
        <position position="117"/>
    </location>
</feature>
<feature type="modified residue" description="Phosphoserine" evidence="11 12 14 15 16">
    <location>
        <position position="412"/>
    </location>
</feature>
<feature type="modified residue" description="Phosphoserine" evidence="11 12 15 16">
    <location>
        <position position="414"/>
    </location>
</feature>
<feature type="splice variant" id="VSP_055568" description="In isoform 2." evidence="8">
    <original>IAASFAVKLFKAWMAEKDAN</original>
    <variation>NEAPVFSPVRQQKKNKVTDS</variation>
    <location>
        <begin position="182"/>
        <end position="201"/>
    </location>
</feature>
<feature type="splice variant" id="VSP_055569" description="In isoform 2." evidence="8">
    <location>
        <begin position="202"/>
        <end position="419"/>
    </location>
</feature>
<feature type="sequence variant" id="VAR_033642" description="In dbSNP:rs35233079.">
    <original>D</original>
    <variation>A</variation>
    <location>
        <position position="44"/>
    </location>
</feature>
<feature type="mutagenesis site" description="Reduced interaction with EIF3C." evidence="7">
    <original>KWYKEAHVAKGK</original>
    <variation>QWYQEAQVAQGQ</variation>
    <location>
        <begin position="380"/>
        <end position="391"/>
    </location>
</feature>
<feature type="mutagenesis site" description="Reduced interaction with EIF2S2." evidence="3 7">
    <original>FVEWLQNAEEE</original>
    <variation>AAEAAQNAAAA</variation>
    <location>
        <begin position="401"/>
        <end position="411"/>
    </location>
</feature>
<feature type="sequence conflict" description="In Ref. 1; AAG39278." evidence="10" ref="1">
    <original>V</original>
    <variation>G</variation>
    <location>
        <position position="203"/>
    </location>
</feature>
<accession>Q9Y6E2</accession>
<accession>A4D123</accession>
<accession>Q3B779</accession>
<accession>Q96JW5</accession>
<accession>Q9H3F7</accession>
<sequence length="419" mass="48162">MNKHQKPVLTGQRFKTRKRDEKEKFEPTVFRDTLVQGLNEAGDDLEAVAKFLDSTGSRLDYRRYADTLFDILVAGSMLAPGGTRIDDGDKTKMTNHCVFSANEDHETIRNYAQVFNKLIRRYKYLEKAFEDEMKKLLLFLKAFSETEQTKLAMLSGILLGNGTLPATILTSLFTDSLVKEGIAASFAVKLFKAWMAEKDANSVTSSLRKANLDKRLLELFPVNRQSVDHFAKYFTDAGLKELSDFLRVQQSLGTRKELQKELQERLSQECPIKEVVLYVKEEMKRNDLPETAVIGLLWTCIMNAVEWNKKEELVAEQALKHLKQYAPLLAVFSSQGQSELILLQKVQEYCYDNIHFMKAFQKIVVLFYKADVLSEEAILKWYKEAHVAKGKSVFLDQMKKFVEWLQNAEEESESEGEEN</sequence>
<keyword id="KW-0007">Acetylation</keyword>
<keyword id="KW-0025">Alternative splicing</keyword>
<keyword id="KW-0963">Cytoplasm</keyword>
<keyword id="KW-0597">Phosphoprotein</keyword>
<keyword id="KW-1267">Proteomics identification</keyword>
<keyword id="KW-1185">Reference proteome</keyword>
<keyword id="KW-0810">Translation regulation</keyword>
<proteinExistence type="evidence at protein level"/>
<comment type="function">
    <text evidence="3 5 6 7">Translation initiation regulator which represses non-AUG initiated translation and repeat-associated non-AUG (RAN) initiated translation by acting as a competitive inhibitor of eukaryotic translation initiation factor 5 (EIF5) function (PubMed:21745818, PubMed:28981728, PubMed:29470543, PubMed:34260931). Increases the accuracy of translation initiation by impeding EIF5-dependent translation from non-AUG codons by competing with it for interaction with EIF2S2 within the 43S pre-initiation complex (PIC) in an EIF3C-binding dependent manner (PubMed:21745818, PubMed:28981728, PubMed:34260931).</text>
</comment>
<comment type="subunit">
    <text evidence="3 4 7">Interacts with EIF3E (PubMed:21745818). Interacts with EIF2S2 (PubMed:21745818, PubMed:25147208, PubMed:34260931). Interacts with EIF3C (PubMed:34260931).</text>
</comment>
<comment type="interaction">
    <interactant intactId="EBI-1051021">
        <id>Q9Y6E2</id>
    </interactant>
    <interactant intactId="EBI-711977">
        <id>P20042</id>
        <label>EIF2S2</label>
    </interactant>
    <organismsDiffer>false</organismsDiffer>
    <experiments>2</experiments>
</comment>
<comment type="subcellular location">
    <subcellularLocation>
        <location evidence="3">Cytoplasm</location>
    </subcellularLocation>
</comment>
<comment type="alternative products">
    <event type="alternative splicing"/>
    <isoform>
        <id>Q9Y6E2-1</id>
        <name>1</name>
        <sequence type="displayed"/>
    </isoform>
    <isoform>
        <id>Q9Y6E2-2</id>
        <name>2</name>
        <sequence type="described" ref="VSP_055568 VSP_055569"/>
    </isoform>
</comment>
<comment type="similarity">
    <text evidence="10">Belongs to the BZW family.</text>
</comment>
<comment type="sequence caution" evidence="10">
    <conflict type="miscellaneous discrepancy">
        <sequence resource="EMBL-CDS" id="AAI07758"/>
    </conflict>
    <text>Contaminating sequence. Potential poly-A sequence.</text>
</comment>
<protein>
    <recommendedName>
        <fullName evidence="9">eIF5-mimic protein 1</fullName>
    </recommendedName>
    <alternativeName>
        <fullName>Basic leucine zipper and W2 domain-containing protein 2</fullName>
    </alternativeName>
</protein>
<name>5MP1_HUMAN</name>
<organism>
    <name type="scientific">Homo sapiens</name>
    <name type="common">Human</name>
    <dbReference type="NCBI Taxonomy" id="9606"/>
    <lineage>
        <taxon>Eukaryota</taxon>
        <taxon>Metazoa</taxon>
        <taxon>Chordata</taxon>
        <taxon>Craniata</taxon>
        <taxon>Vertebrata</taxon>
        <taxon>Euteleostomi</taxon>
        <taxon>Mammalia</taxon>
        <taxon>Eutheria</taxon>
        <taxon>Euarchontoglires</taxon>
        <taxon>Primates</taxon>
        <taxon>Haplorrhini</taxon>
        <taxon>Catarrhini</taxon>
        <taxon>Hominidae</taxon>
        <taxon>Homo</taxon>
    </lineage>
</organism>
<gene>
    <name type="primary">BZW2</name>
    <name evidence="9" type="synonym">5MP1</name>
    <name type="ORF">HSPC028</name>
    <name type="ORF">MSTP017</name>
</gene>
<evidence type="ECO:0000255" key="1">
    <source>
        <dbReference type="PROSITE-ProRule" id="PRU00695"/>
    </source>
</evidence>
<evidence type="ECO:0000256" key="2">
    <source>
        <dbReference type="SAM" id="MobiDB-lite"/>
    </source>
</evidence>
<evidence type="ECO:0000269" key="3">
    <source>
    </source>
</evidence>
<evidence type="ECO:0000269" key="4">
    <source>
    </source>
</evidence>
<evidence type="ECO:0000269" key="5">
    <source>
    </source>
</evidence>
<evidence type="ECO:0000269" key="6">
    <source>
    </source>
</evidence>
<evidence type="ECO:0000269" key="7">
    <source>
    </source>
</evidence>
<evidence type="ECO:0000303" key="8">
    <source>
    </source>
</evidence>
<evidence type="ECO:0000303" key="9">
    <source>
    </source>
</evidence>
<evidence type="ECO:0000305" key="10"/>
<evidence type="ECO:0007744" key="11">
    <source>
    </source>
</evidence>
<evidence type="ECO:0007744" key="12">
    <source>
    </source>
</evidence>
<evidence type="ECO:0007744" key="13">
    <source>
    </source>
</evidence>
<evidence type="ECO:0007744" key="14">
    <source>
    </source>
</evidence>
<evidence type="ECO:0007744" key="15">
    <source>
    </source>
</evidence>
<evidence type="ECO:0007744" key="16">
    <source>
    </source>
</evidence>
<dbReference type="EMBL" id="AF110323">
    <property type="protein sequence ID" value="AAG39278.1"/>
    <property type="molecule type" value="mRNA"/>
</dbReference>
<dbReference type="EMBL" id="AF083246">
    <property type="protein sequence ID" value="AAD39844.1"/>
    <property type="molecule type" value="mRNA"/>
</dbReference>
<dbReference type="EMBL" id="AK001218">
    <property type="protein sequence ID" value="BAA91562.1"/>
    <property type="molecule type" value="mRNA"/>
</dbReference>
<dbReference type="EMBL" id="AK027837">
    <property type="protein sequence ID" value="BAB55401.1"/>
    <property type="molecule type" value="mRNA"/>
</dbReference>
<dbReference type="EMBL" id="CH236948">
    <property type="protein sequence ID" value="EAL24285.1"/>
    <property type="molecule type" value="Genomic_DNA"/>
</dbReference>
<dbReference type="EMBL" id="CH471073">
    <property type="protein sequence ID" value="EAW93675.1"/>
    <property type="molecule type" value="Genomic_DNA"/>
</dbReference>
<dbReference type="EMBL" id="CH471073">
    <property type="protein sequence ID" value="EAW93678.1"/>
    <property type="molecule type" value="Genomic_DNA"/>
</dbReference>
<dbReference type="EMBL" id="BC003056">
    <property type="protein sequence ID" value="AAH03056.1"/>
    <property type="molecule type" value="mRNA"/>
</dbReference>
<dbReference type="EMBL" id="BC008453">
    <property type="protein sequence ID" value="AAH08453.1"/>
    <property type="molecule type" value="mRNA"/>
</dbReference>
<dbReference type="EMBL" id="BC009597">
    <property type="protein sequence ID" value="AAH09597.1"/>
    <property type="molecule type" value="mRNA"/>
</dbReference>
<dbReference type="EMBL" id="BC107757">
    <property type="protein sequence ID" value="AAI07758.1"/>
    <property type="status" value="ALT_SEQ"/>
    <property type="molecule type" value="mRNA"/>
</dbReference>
<dbReference type="CCDS" id="CCDS5362.1">
    <molecule id="Q9Y6E2-1"/>
</dbReference>
<dbReference type="RefSeq" id="NP_001153239.1">
    <molecule id="Q9Y6E2-1"/>
    <property type="nucleotide sequence ID" value="NM_001159767.2"/>
</dbReference>
<dbReference type="RefSeq" id="NP_001349646.1">
    <molecule id="Q9Y6E2-1"/>
    <property type="nucleotide sequence ID" value="NM_001362717.2"/>
</dbReference>
<dbReference type="RefSeq" id="NP_054757.1">
    <molecule id="Q9Y6E2-1"/>
    <property type="nucleotide sequence ID" value="NM_014038.3"/>
</dbReference>
<dbReference type="RefSeq" id="XP_006715769.1">
    <property type="nucleotide sequence ID" value="XM_006715706.1"/>
</dbReference>
<dbReference type="RefSeq" id="XP_006715770.1">
    <molecule id="Q9Y6E2-1"/>
    <property type="nucleotide sequence ID" value="XM_006715707.2"/>
</dbReference>
<dbReference type="RefSeq" id="XP_006715771.1">
    <molecule id="Q9Y6E2-1"/>
    <property type="nucleotide sequence ID" value="XM_006715708.2"/>
</dbReference>
<dbReference type="RefSeq" id="XP_054213961.1">
    <molecule id="Q9Y6E2-1"/>
    <property type="nucleotide sequence ID" value="XM_054357986.1"/>
</dbReference>
<dbReference type="SMR" id="Q9Y6E2"/>
<dbReference type="BioGRID" id="118793">
    <property type="interactions" value="131"/>
</dbReference>
<dbReference type="FunCoup" id="Q9Y6E2">
    <property type="interactions" value="1824"/>
</dbReference>
<dbReference type="IntAct" id="Q9Y6E2">
    <property type="interactions" value="64"/>
</dbReference>
<dbReference type="MINT" id="Q9Y6E2"/>
<dbReference type="STRING" id="9606.ENSP00000397249"/>
<dbReference type="GlyGen" id="Q9Y6E2">
    <property type="glycosylation" value="2 sites, 1 O-linked glycan (2 sites)"/>
</dbReference>
<dbReference type="iPTMnet" id="Q9Y6E2"/>
<dbReference type="MetOSite" id="Q9Y6E2"/>
<dbReference type="PhosphoSitePlus" id="Q9Y6E2"/>
<dbReference type="SwissPalm" id="Q9Y6E2"/>
<dbReference type="BioMuta" id="BZW2"/>
<dbReference type="DMDM" id="74762077"/>
<dbReference type="jPOST" id="Q9Y6E2"/>
<dbReference type="MassIVE" id="Q9Y6E2"/>
<dbReference type="PaxDb" id="9606-ENSP00000397249"/>
<dbReference type="PeptideAtlas" id="Q9Y6E2"/>
<dbReference type="ProteomicsDB" id="86659">
    <molecule id="Q9Y6E2-1"/>
</dbReference>
<dbReference type="Pumba" id="Q9Y6E2"/>
<dbReference type="Antibodypedia" id="11817">
    <property type="antibodies" value="106 antibodies from 27 providers"/>
</dbReference>
<dbReference type="DNASU" id="28969"/>
<dbReference type="Ensembl" id="ENST00000258761.8">
    <molecule id="Q9Y6E2-1"/>
    <property type="protein sequence ID" value="ENSP00000258761.3"/>
    <property type="gene ID" value="ENSG00000136261.16"/>
</dbReference>
<dbReference type="Ensembl" id="ENST00000433922.6">
    <molecule id="Q9Y6E2-1"/>
    <property type="protein sequence ID" value="ENSP00000397249.2"/>
    <property type="gene ID" value="ENSG00000136261.16"/>
</dbReference>
<dbReference type="GeneID" id="28969"/>
<dbReference type="KEGG" id="hsa:28969"/>
<dbReference type="MANE-Select" id="ENST00000258761.8">
    <property type="protein sequence ID" value="ENSP00000258761.3"/>
    <property type="RefSeq nucleotide sequence ID" value="NM_014038.3"/>
    <property type="RefSeq protein sequence ID" value="NP_054757.1"/>
</dbReference>
<dbReference type="UCSC" id="uc003stj.3">
    <molecule id="Q9Y6E2-1"/>
    <property type="organism name" value="human"/>
</dbReference>
<dbReference type="AGR" id="HGNC:18808"/>
<dbReference type="CTD" id="28969"/>
<dbReference type="DisGeNET" id="28969"/>
<dbReference type="GeneCards" id="BZW2"/>
<dbReference type="HGNC" id="HGNC:18808">
    <property type="gene designation" value="BZW2"/>
</dbReference>
<dbReference type="HPA" id="ENSG00000136261">
    <property type="expression patterns" value="Tissue enhanced (heart muscle, skeletal muscle, tongue)"/>
</dbReference>
<dbReference type="MIM" id="619275">
    <property type="type" value="gene"/>
</dbReference>
<dbReference type="neXtProt" id="NX_Q9Y6E2"/>
<dbReference type="OpenTargets" id="ENSG00000136261"/>
<dbReference type="PharmGKB" id="PA38690"/>
<dbReference type="VEuPathDB" id="HostDB:ENSG00000136261"/>
<dbReference type="eggNOG" id="KOG2297">
    <property type="taxonomic scope" value="Eukaryota"/>
</dbReference>
<dbReference type="GeneTree" id="ENSGT00390000012561"/>
<dbReference type="HOGENOM" id="CLU_032849_0_1_1"/>
<dbReference type="InParanoid" id="Q9Y6E2"/>
<dbReference type="OMA" id="HCVFFAI"/>
<dbReference type="OrthoDB" id="1727522at2759"/>
<dbReference type="PAN-GO" id="Q9Y6E2">
    <property type="GO annotations" value="1 GO annotation based on evolutionary models"/>
</dbReference>
<dbReference type="PhylomeDB" id="Q9Y6E2"/>
<dbReference type="TreeFam" id="TF324313"/>
<dbReference type="PathwayCommons" id="Q9Y6E2"/>
<dbReference type="SignaLink" id="Q9Y6E2"/>
<dbReference type="SIGNOR" id="Q9Y6E2"/>
<dbReference type="BioGRID-ORCS" id="28969">
    <property type="hits" value="16 hits in 1163 CRISPR screens"/>
</dbReference>
<dbReference type="CD-CODE" id="91857CE7">
    <property type="entry name" value="Nucleolus"/>
</dbReference>
<dbReference type="ChiTaRS" id="BZW2">
    <property type="organism name" value="human"/>
</dbReference>
<dbReference type="GeneWiki" id="BZW2"/>
<dbReference type="GenomeRNAi" id="28969"/>
<dbReference type="Pharos" id="Q9Y6E2">
    <property type="development level" value="Tbio"/>
</dbReference>
<dbReference type="PRO" id="PR:Q9Y6E2"/>
<dbReference type="Proteomes" id="UP000005640">
    <property type="component" value="Chromosome 7"/>
</dbReference>
<dbReference type="RNAct" id="Q9Y6E2">
    <property type="molecule type" value="protein"/>
</dbReference>
<dbReference type="Bgee" id="ENSG00000136261">
    <property type="expression patterns" value="Expressed in skeletal muscle tissue of biceps brachii and 208 other cell types or tissues"/>
</dbReference>
<dbReference type="ExpressionAtlas" id="Q9Y6E2">
    <property type="expression patterns" value="baseline and differential"/>
</dbReference>
<dbReference type="GO" id="GO:0005737">
    <property type="term" value="C:cytoplasm"/>
    <property type="evidence" value="ECO:0000314"/>
    <property type="project" value="UniProtKB"/>
</dbReference>
<dbReference type="GO" id="GO:0016020">
    <property type="term" value="C:membrane"/>
    <property type="evidence" value="ECO:0007005"/>
    <property type="project" value="UniProtKB"/>
</dbReference>
<dbReference type="GO" id="GO:0045296">
    <property type="term" value="F:cadherin binding"/>
    <property type="evidence" value="ECO:0007005"/>
    <property type="project" value="BHF-UCL"/>
</dbReference>
<dbReference type="GO" id="GO:0006446">
    <property type="term" value="P:regulation of translational initiation"/>
    <property type="evidence" value="ECO:0000314"/>
    <property type="project" value="UniProtKB"/>
</dbReference>
<dbReference type="CDD" id="cd11560">
    <property type="entry name" value="W2_eIF5C_like"/>
    <property type="match status" value="1"/>
</dbReference>
<dbReference type="FunFam" id="1.25.40.180:FF:000006">
    <property type="entry name" value="Basic leucine zipper and W2 domain-containing protein 1"/>
    <property type="match status" value="1"/>
</dbReference>
<dbReference type="Gene3D" id="1.25.40.180">
    <property type="match status" value="1"/>
</dbReference>
<dbReference type="InterPro" id="IPR016024">
    <property type="entry name" value="ARM-type_fold"/>
</dbReference>
<dbReference type="InterPro" id="IPR051245">
    <property type="entry name" value="eIF5-mimic_regulator"/>
</dbReference>
<dbReference type="InterPro" id="IPR043510">
    <property type="entry name" value="W2_BZW1/2"/>
</dbReference>
<dbReference type="InterPro" id="IPR003307">
    <property type="entry name" value="W2_domain"/>
</dbReference>
<dbReference type="PANTHER" id="PTHR14208">
    <property type="entry name" value="BASIC LEUCINE ZIPPER AND W2 DOMAIN-CONTAINING PROTEIN"/>
    <property type="match status" value="1"/>
</dbReference>
<dbReference type="PANTHER" id="PTHR14208:SF7">
    <property type="entry name" value="EIF5-MIMIC PROTEIN 1"/>
    <property type="match status" value="1"/>
</dbReference>
<dbReference type="Pfam" id="PF25504">
    <property type="entry name" value="HEAT_5MP1_2"/>
    <property type="match status" value="1"/>
</dbReference>
<dbReference type="Pfam" id="PF02020">
    <property type="entry name" value="W2"/>
    <property type="match status" value="1"/>
</dbReference>
<dbReference type="SMART" id="SM00515">
    <property type="entry name" value="eIF5C"/>
    <property type="match status" value="1"/>
</dbReference>
<dbReference type="SUPFAM" id="SSF48371">
    <property type="entry name" value="ARM repeat"/>
    <property type="match status" value="1"/>
</dbReference>
<dbReference type="PROSITE" id="PS51363">
    <property type="entry name" value="W2"/>
    <property type="match status" value="1"/>
</dbReference>